<evidence type="ECO:0000255" key="1">
    <source>
        <dbReference type="PROSITE-ProRule" id="PRU01188"/>
    </source>
</evidence>
<evidence type="ECO:0000269" key="2">
    <source>
    </source>
</evidence>
<evidence type="ECO:0000305" key="3"/>
<name>KRT84_HUMAN</name>
<accession>Q9NSB2</accession>
<accession>B2RA43</accession>
<accession>Q6ISB0</accession>
<accession>Q701L6</accession>
<feature type="chain" id="PRO_0000063700" description="Keratin, type II cuticular Hb4">
    <location>
        <begin position="1"/>
        <end position="600"/>
    </location>
</feature>
<feature type="domain" description="IF rod" evidence="1">
    <location>
        <begin position="165"/>
        <end position="476"/>
    </location>
</feature>
<feature type="region of interest" description="Head">
    <location>
        <begin position="1"/>
        <end position="165"/>
    </location>
</feature>
<feature type="region of interest" description="Coil 1A">
    <location>
        <begin position="166"/>
        <end position="200"/>
    </location>
</feature>
<feature type="region of interest" description="Linker 1">
    <location>
        <begin position="201"/>
        <end position="210"/>
    </location>
</feature>
<feature type="region of interest" description="Coil 1B">
    <location>
        <begin position="211"/>
        <end position="311"/>
    </location>
</feature>
<feature type="region of interest" description="Linker 12">
    <location>
        <begin position="312"/>
        <end position="328"/>
    </location>
</feature>
<feature type="region of interest" description="Coil 2">
    <location>
        <begin position="329"/>
        <end position="472"/>
    </location>
</feature>
<feature type="region of interest" description="Tail">
    <location>
        <begin position="473"/>
        <end position="600"/>
    </location>
</feature>
<feature type="sequence variant" id="VAR_018122" description="In dbSNP:rs1613931.">
    <original>R</original>
    <variation>Q</variation>
    <location>
        <position position="184"/>
    </location>
</feature>
<feature type="sequence variant" id="VAR_030734" description="In dbSNP:rs1732301.">
    <original>S</original>
    <variation>N</variation>
    <location>
        <position position="198"/>
    </location>
</feature>
<feature type="sequence variant" id="VAR_018123" description="In dbSNP:rs2245203.">
    <original>I</original>
    <variation>V</variation>
    <location>
        <position position="206"/>
    </location>
</feature>
<feature type="sequence variant" id="VAR_018124" description="In dbSNP:rs951773." evidence="2">
    <original>C</original>
    <variation>R</variation>
    <location>
        <position position="446"/>
    </location>
</feature>
<feature type="sequence variant" id="VAR_030735" description="In dbSNP:rs7297413.">
    <original>G</original>
    <variation>R</variation>
    <location>
        <position position="497"/>
    </location>
</feature>
<feature type="sequence conflict" description="In Ref. 5; CAF31524." evidence="3" ref="5">
    <original>I</original>
    <variation>V</variation>
    <location>
        <position position="73"/>
    </location>
</feature>
<feature type="sequence conflict" description="In Ref. 2; BAG36740." evidence="3" ref="2">
    <original>Q</original>
    <variation>H</variation>
    <location>
        <position position="159"/>
    </location>
</feature>
<feature type="sequence conflict" description="In Ref. 5; CAF31524." evidence="3" ref="5">
    <original>A</original>
    <variation>T</variation>
    <location>
        <position position="177"/>
    </location>
</feature>
<feature type="sequence conflict" description="In Ref. 2; BAG36740." evidence="3" ref="2">
    <original>D</original>
    <variation>G</variation>
    <location>
        <position position="459"/>
    </location>
</feature>
<feature type="sequence conflict" description="In Ref. 5; CAF31524." evidence="3" ref="5">
    <original>S</original>
    <variation>G</variation>
    <location>
        <position position="548"/>
    </location>
</feature>
<dbReference type="EMBL" id="Y19209">
    <property type="protein sequence ID" value="CAB76829.1"/>
    <property type="molecule type" value="Genomic_DNA"/>
</dbReference>
<dbReference type="EMBL" id="AK314030">
    <property type="protein sequence ID" value="BAG36740.1"/>
    <property type="molecule type" value="mRNA"/>
</dbReference>
<dbReference type="EMBL" id="AC078865">
    <property type="status" value="NOT_ANNOTATED_CDS"/>
    <property type="molecule type" value="Genomic_DNA"/>
</dbReference>
<dbReference type="EMBL" id="BC069647">
    <property type="protein sequence ID" value="AAH69647.1"/>
    <property type="molecule type" value="mRNA"/>
</dbReference>
<dbReference type="EMBL" id="AJ628420">
    <property type="protein sequence ID" value="CAF31524.1"/>
    <property type="molecule type" value="mRNA"/>
</dbReference>
<dbReference type="CCDS" id="CCDS8825.1"/>
<dbReference type="RefSeq" id="NP_149034.2">
    <property type="nucleotide sequence ID" value="NM_033045.3"/>
</dbReference>
<dbReference type="RefSeq" id="XP_011536637.1">
    <property type="nucleotide sequence ID" value="XM_011538335.3"/>
</dbReference>
<dbReference type="SMR" id="Q9NSB2"/>
<dbReference type="BioGRID" id="110088">
    <property type="interactions" value="48"/>
</dbReference>
<dbReference type="FunCoup" id="Q9NSB2">
    <property type="interactions" value="127"/>
</dbReference>
<dbReference type="IntAct" id="Q9NSB2">
    <property type="interactions" value="9"/>
</dbReference>
<dbReference type="STRING" id="9606.ENSP00000257951"/>
<dbReference type="GlyGen" id="Q9NSB2">
    <property type="glycosylation" value="2 sites, 1 O-linked glycan (1 site)"/>
</dbReference>
<dbReference type="iPTMnet" id="Q9NSB2"/>
<dbReference type="PhosphoSitePlus" id="Q9NSB2"/>
<dbReference type="SwissPalm" id="Q9NSB2"/>
<dbReference type="BioMuta" id="KRT84"/>
<dbReference type="DMDM" id="311033397"/>
<dbReference type="jPOST" id="Q9NSB2"/>
<dbReference type="MassIVE" id="Q9NSB2"/>
<dbReference type="PaxDb" id="9606-ENSP00000257951"/>
<dbReference type="PeptideAtlas" id="Q9NSB2"/>
<dbReference type="PRIDE" id="Q9NSB2"/>
<dbReference type="ProteomicsDB" id="82523"/>
<dbReference type="Antibodypedia" id="43076">
    <property type="antibodies" value="69 antibodies from 19 providers"/>
</dbReference>
<dbReference type="DNASU" id="3890"/>
<dbReference type="Ensembl" id="ENST00000257951.3">
    <property type="protein sequence ID" value="ENSP00000257951.3"/>
    <property type="gene ID" value="ENSG00000161849.3"/>
</dbReference>
<dbReference type="GeneID" id="3890"/>
<dbReference type="KEGG" id="hsa:3890"/>
<dbReference type="MANE-Select" id="ENST00000257951.3">
    <property type="protein sequence ID" value="ENSP00000257951.3"/>
    <property type="RefSeq nucleotide sequence ID" value="NM_033045.4"/>
    <property type="RefSeq protein sequence ID" value="NP_149034.2"/>
</dbReference>
<dbReference type="UCSC" id="uc001sah.2">
    <property type="organism name" value="human"/>
</dbReference>
<dbReference type="AGR" id="HGNC:6461"/>
<dbReference type="CTD" id="3890"/>
<dbReference type="DisGeNET" id="3890"/>
<dbReference type="GeneCards" id="KRT84"/>
<dbReference type="HGNC" id="HGNC:6461">
    <property type="gene designation" value="KRT84"/>
</dbReference>
<dbReference type="HPA" id="ENSG00000161849">
    <property type="expression patterns" value="Group enriched (lymphoid tissue, skin)"/>
</dbReference>
<dbReference type="MIM" id="602766">
    <property type="type" value="gene"/>
</dbReference>
<dbReference type="neXtProt" id="NX_Q9NSB2"/>
<dbReference type="OpenTargets" id="ENSG00000161849"/>
<dbReference type="PharmGKB" id="PA30250"/>
<dbReference type="VEuPathDB" id="HostDB:ENSG00000161849"/>
<dbReference type="eggNOG" id="ENOG502QWIE">
    <property type="taxonomic scope" value="Eukaryota"/>
</dbReference>
<dbReference type="GeneTree" id="ENSGT00940000162040"/>
<dbReference type="HOGENOM" id="CLU_012560_6_1_1"/>
<dbReference type="InParanoid" id="Q9NSB2"/>
<dbReference type="OMA" id="EQKCARS"/>
<dbReference type="OrthoDB" id="9836621at2759"/>
<dbReference type="PAN-GO" id="Q9NSB2">
    <property type="GO annotations" value="4 GO annotations based on evolutionary models"/>
</dbReference>
<dbReference type="PhylomeDB" id="Q9NSB2"/>
<dbReference type="TreeFam" id="TF317854"/>
<dbReference type="PathwayCommons" id="Q9NSB2"/>
<dbReference type="Reactome" id="R-HSA-6805567">
    <property type="pathway name" value="Keratinization"/>
</dbReference>
<dbReference type="Reactome" id="R-HSA-6809371">
    <property type="pathway name" value="Formation of the cornified envelope"/>
</dbReference>
<dbReference type="SignaLink" id="Q9NSB2"/>
<dbReference type="BioGRID-ORCS" id="3890">
    <property type="hits" value="9 hits in 1138 CRISPR screens"/>
</dbReference>
<dbReference type="GenomeRNAi" id="3890"/>
<dbReference type="Pharos" id="Q9NSB2">
    <property type="development level" value="Tdark"/>
</dbReference>
<dbReference type="PRO" id="PR:Q9NSB2"/>
<dbReference type="Proteomes" id="UP000005640">
    <property type="component" value="Chromosome 12"/>
</dbReference>
<dbReference type="RNAct" id="Q9NSB2">
    <property type="molecule type" value="protein"/>
</dbReference>
<dbReference type="Bgee" id="ENSG00000161849">
    <property type="expression patterns" value="Expressed in placenta and 16 other cell types or tissues"/>
</dbReference>
<dbReference type="GO" id="GO:0005829">
    <property type="term" value="C:cytosol"/>
    <property type="evidence" value="ECO:0000304"/>
    <property type="project" value="Reactome"/>
</dbReference>
<dbReference type="GO" id="GO:0070062">
    <property type="term" value="C:extracellular exosome"/>
    <property type="evidence" value="ECO:0007005"/>
    <property type="project" value="UniProtKB"/>
</dbReference>
<dbReference type="GO" id="GO:0045095">
    <property type="term" value="C:keratin filament"/>
    <property type="evidence" value="ECO:0000314"/>
    <property type="project" value="UniProtKB"/>
</dbReference>
<dbReference type="GO" id="GO:0005200">
    <property type="term" value="F:structural constituent of cytoskeleton"/>
    <property type="evidence" value="ECO:0000303"/>
    <property type="project" value="UniProtKB"/>
</dbReference>
<dbReference type="GO" id="GO:0030280">
    <property type="term" value="F:structural constituent of skin epidermis"/>
    <property type="evidence" value="ECO:0000318"/>
    <property type="project" value="GO_Central"/>
</dbReference>
<dbReference type="GO" id="GO:0001942">
    <property type="term" value="P:hair follicle development"/>
    <property type="evidence" value="ECO:0000303"/>
    <property type="project" value="UniProtKB"/>
</dbReference>
<dbReference type="GO" id="GO:0045109">
    <property type="term" value="P:intermediate filament organization"/>
    <property type="evidence" value="ECO:0000318"/>
    <property type="project" value="GO_Central"/>
</dbReference>
<dbReference type="GO" id="GO:0031424">
    <property type="term" value="P:keratinization"/>
    <property type="evidence" value="ECO:0000318"/>
    <property type="project" value="GO_Central"/>
</dbReference>
<dbReference type="GO" id="GO:0035878">
    <property type="term" value="P:nail development"/>
    <property type="evidence" value="ECO:0000303"/>
    <property type="project" value="UniProtKB"/>
</dbReference>
<dbReference type="GO" id="GO:0045616">
    <property type="term" value="P:regulation of keratinocyte differentiation"/>
    <property type="evidence" value="ECO:0007669"/>
    <property type="project" value="Ensembl"/>
</dbReference>
<dbReference type="FunFam" id="1.20.5.1160:FF:000001">
    <property type="entry name" value="Keratin type II"/>
    <property type="match status" value="1"/>
</dbReference>
<dbReference type="FunFam" id="1.20.5.170:FF:000004">
    <property type="entry name" value="Keratin, type II cytoskeletal 5"/>
    <property type="match status" value="1"/>
</dbReference>
<dbReference type="FunFam" id="1.20.5.500:FF:000001">
    <property type="entry name" value="Type II keratin 23"/>
    <property type="match status" value="1"/>
</dbReference>
<dbReference type="Gene3D" id="1.20.5.170">
    <property type="match status" value="1"/>
</dbReference>
<dbReference type="Gene3D" id="1.20.5.500">
    <property type="entry name" value="Single helix bin"/>
    <property type="match status" value="1"/>
</dbReference>
<dbReference type="Gene3D" id="1.20.5.1160">
    <property type="entry name" value="Vasodilator-stimulated phosphoprotein"/>
    <property type="match status" value="1"/>
</dbReference>
<dbReference type="InterPro" id="IPR018039">
    <property type="entry name" value="IF_conserved"/>
</dbReference>
<dbReference type="InterPro" id="IPR039008">
    <property type="entry name" value="IF_rod_dom"/>
</dbReference>
<dbReference type="InterPro" id="IPR032444">
    <property type="entry name" value="Keratin_2_head"/>
</dbReference>
<dbReference type="InterPro" id="IPR003054">
    <property type="entry name" value="Keratin_II"/>
</dbReference>
<dbReference type="PANTHER" id="PTHR45616">
    <property type="entry name" value="GATA-TYPE DOMAIN-CONTAINING PROTEIN"/>
    <property type="match status" value="1"/>
</dbReference>
<dbReference type="PANTHER" id="PTHR45616:SF17">
    <property type="entry name" value="KERATIN, TYPE II CUTICULAR HB4"/>
    <property type="match status" value="1"/>
</dbReference>
<dbReference type="Pfam" id="PF00038">
    <property type="entry name" value="Filament"/>
    <property type="match status" value="1"/>
</dbReference>
<dbReference type="Pfam" id="PF16208">
    <property type="entry name" value="Keratin_2_head"/>
    <property type="match status" value="1"/>
</dbReference>
<dbReference type="PRINTS" id="PR01276">
    <property type="entry name" value="TYPE2KERATIN"/>
</dbReference>
<dbReference type="SMART" id="SM01391">
    <property type="entry name" value="Filament"/>
    <property type="match status" value="1"/>
</dbReference>
<dbReference type="SUPFAM" id="SSF64593">
    <property type="entry name" value="Intermediate filament protein, coiled coil region"/>
    <property type="match status" value="2"/>
</dbReference>
<dbReference type="PROSITE" id="PS00226">
    <property type="entry name" value="IF_ROD_1"/>
    <property type="match status" value="1"/>
</dbReference>
<dbReference type="PROSITE" id="PS51842">
    <property type="entry name" value="IF_ROD_2"/>
    <property type="match status" value="1"/>
</dbReference>
<comment type="subunit">
    <text>Heterotetramer of two type I and two type II keratins.</text>
</comment>
<comment type="tissue specificity">
    <text evidence="2">Expressed in the hair follicles.</text>
</comment>
<comment type="miscellaneous">
    <text>There are two types of hair/microfibrillar keratin, I (acidic) and II (neutral to basic).</text>
</comment>
<comment type="similarity">
    <text evidence="1">Belongs to the intermediate filament family.</text>
</comment>
<proteinExistence type="evidence at protein level"/>
<keyword id="KW-0175">Coiled coil</keyword>
<keyword id="KW-0403">Intermediate filament</keyword>
<keyword id="KW-0416">Keratin</keyword>
<keyword id="KW-1267">Proteomics identification</keyword>
<keyword id="KW-1185">Reference proteome</keyword>
<sequence length="600" mass="64842">MSCRSYRVSSGHRVGNFSSCSAMTPQNLNRFRANSVSCWSGPGFRGLGSFGSRSVITFGSYSPRIAAVGSRPIHCGVRFGAGCGMGFGDGRGVGLGPRADSCVGLGFGAGSGIGYGFGGPGFGYRVGGVGVPAAPSITAVTVNKSLLTPLNLEIDPNAQRVKKDEKEQIKTLNNKFASFIDKVRFLEQQNKLLETKWSFLQEQKCIRSNLEPLFESYITNLRRQLEVLVSDQARLQAERNHLQDVLEGFKKKYEEEVVCRANAENEFVALKKDVDAAFMNKSDLEANVDTLTQEIDFLKTLYMEEIQLLQSHISETSVIVKMDNSRDLNLDGIIAEVKAQYEEVARRSRADAEAWYQTKYEEMQVTAGQHCDNLRNIRNEINELTRLIQRLKAEIEHAKAQRAKLEAAVAEAEQQGEATLSDAKCKLADLECALQQAKQDMARQLCEYQELMNAKLGLDIEIATYRRLLEGEESRLCEGVGPVNISVSSSRGGLVCGPEPLVAGSTLSRGGVTFSGSSSVCATSGVLASCGPSLGGARVAPATGDLLSTGTRSGSMLISEACVPSVPCPLPTQGGFSSCSGGRSSSVRFVSTTTSCRTKY</sequence>
<gene>
    <name type="primary">KRT84</name>
    <name type="synonym">KRTHB4</name>
</gene>
<organism>
    <name type="scientific">Homo sapiens</name>
    <name type="common">Human</name>
    <dbReference type="NCBI Taxonomy" id="9606"/>
    <lineage>
        <taxon>Eukaryota</taxon>
        <taxon>Metazoa</taxon>
        <taxon>Chordata</taxon>
        <taxon>Craniata</taxon>
        <taxon>Vertebrata</taxon>
        <taxon>Euteleostomi</taxon>
        <taxon>Mammalia</taxon>
        <taxon>Eutheria</taxon>
        <taxon>Euarchontoglires</taxon>
        <taxon>Primates</taxon>
        <taxon>Haplorrhini</taxon>
        <taxon>Catarrhini</taxon>
        <taxon>Hominidae</taxon>
        <taxon>Homo</taxon>
    </lineage>
</organism>
<reference key="1">
    <citation type="journal article" date="2000" name="J. Invest. Dermatol.">
        <title>Characterization of a 300 kbp region of human DNA containing the type II hair keratin.</title>
        <authorList>
            <person name="Rogers M.A."/>
            <person name="Winter H."/>
            <person name="Langbein L."/>
            <person name="Wolf C."/>
            <person name="Schweizer J."/>
        </authorList>
    </citation>
    <scope>NUCLEOTIDE SEQUENCE [GENOMIC DNA / MRNA]</scope>
    <scope>TISSUE SPECIFICITY</scope>
    <scope>VARIANT ARG-446</scope>
    <source>
        <tissue>Scalp</tissue>
    </source>
</reference>
<reference key="2">
    <citation type="journal article" date="2004" name="Nat. Genet.">
        <title>Complete sequencing and characterization of 21,243 full-length human cDNAs.</title>
        <authorList>
            <person name="Ota T."/>
            <person name="Suzuki Y."/>
            <person name="Nishikawa T."/>
            <person name="Otsuki T."/>
            <person name="Sugiyama T."/>
            <person name="Irie R."/>
            <person name="Wakamatsu A."/>
            <person name="Hayashi K."/>
            <person name="Sato H."/>
            <person name="Nagai K."/>
            <person name="Kimura K."/>
            <person name="Makita H."/>
            <person name="Sekine M."/>
            <person name="Obayashi M."/>
            <person name="Nishi T."/>
            <person name="Shibahara T."/>
            <person name="Tanaka T."/>
            <person name="Ishii S."/>
            <person name="Yamamoto J."/>
            <person name="Saito K."/>
            <person name="Kawai Y."/>
            <person name="Isono Y."/>
            <person name="Nakamura Y."/>
            <person name="Nagahari K."/>
            <person name="Murakami K."/>
            <person name="Yasuda T."/>
            <person name="Iwayanagi T."/>
            <person name="Wagatsuma M."/>
            <person name="Shiratori A."/>
            <person name="Sudo H."/>
            <person name="Hosoiri T."/>
            <person name="Kaku Y."/>
            <person name="Kodaira H."/>
            <person name="Kondo H."/>
            <person name="Sugawara M."/>
            <person name="Takahashi M."/>
            <person name="Kanda K."/>
            <person name="Yokoi T."/>
            <person name="Furuya T."/>
            <person name="Kikkawa E."/>
            <person name="Omura Y."/>
            <person name="Abe K."/>
            <person name="Kamihara K."/>
            <person name="Katsuta N."/>
            <person name="Sato K."/>
            <person name="Tanikawa M."/>
            <person name="Yamazaki M."/>
            <person name="Ninomiya K."/>
            <person name="Ishibashi T."/>
            <person name="Yamashita H."/>
            <person name="Murakawa K."/>
            <person name="Fujimori K."/>
            <person name="Tanai H."/>
            <person name="Kimata M."/>
            <person name="Watanabe M."/>
            <person name="Hiraoka S."/>
            <person name="Chiba Y."/>
            <person name="Ishida S."/>
            <person name="Ono Y."/>
            <person name="Takiguchi S."/>
            <person name="Watanabe S."/>
            <person name="Yosida M."/>
            <person name="Hotuta T."/>
            <person name="Kusano J."/>
            <person name="Kanehori K."/>
            <person name="Takahashi-Fujii A."/>
            <person name="Hara H."/>
            <person name="Tanase T.-O."/>
            <person name="Nomura Y."/>
            <person name="Togiya S."/>
            <person name="Komai F."/>
            <person name="Hara R."/>
            <person name="Takeuchi K."/>
            <person name="Arita M."/>
            <person name="Imose N."/>
            <person name="Musashino K."/>
            <person name="Yuuki H."/>
            <person name="Oshima A."/>
            <person name="Sasaki N."/>
            <person name="Aotsuka S."/>
            <person name="Yoshikawa Y."/>
            <person name="Matsunawa H."/>
            <person name="Ichihara T."/>
            <person name="Shiohata N."/>
            <person name="Sano S."/>
            <person name="Moriya S."/>
            <person name="Momiyama H."/>
            <person name="Satoh N."/>
            <person name="Takami S."/>
            <person name="Terashima Y."/>
            <person name="Suzuki O."/>
            <person name="Nakagawa S."/>
            <person name="Senoh A."/>
            <person name="Mizoguchi H."/>
            <person name="Goto Y."/>
            <person name="Shimizu F."/>
            <person name="Wakebe H."/>
            <person name="Hishigaki H."/>
            <person name="Watanabe T."/>
            <person name="Sugiyama A."/>
            <person name="Takemoto M."/>
            <person name="Kawakami B."/>
            <person name="Yamazaki M."/>
            <person name="Watanabe K."/>
            <person name="Kumagai A."/>
            <person name="Itakura S."/>
            <person name="Fukuzumi Y."/>
            <person name="Fujimori Y."/>
            <person name="Komiyama M."/>
            <person name="Tashiro H."/>
            <person name="Tanigami A."/>
            <person name="Fujiwara T."/>
            <person name="Ono T."/>
            <person name="Yamada K."/>
            <person name="Fujii Y."/>
            <person name="Ozaki K."/>
            <person name="Hirao M."/>
            <person name="Ohmori Y."/>
            <person name="Kawabata A."/>
            <person name="Hikiji T."/>
            <person name="Kobatake N."/>
            <person name="Inagaki H."/>
            <person name="Ikema Y."/>
            <person name="Okamoto S."/>
            <person name="Okitani R."/>
            <person name="Kawakami T."/>
            <person name="Noguchi S."/>
            <person name="Itoh T."/>
            <person name="Shigeta K."/>
            <person name="Senba T."/>
            <person name="Matsumura K."/>
            <person name="Nakajima Y."/>
            <person name="Mizuno T."/>
            <person name="Morinaga M."/>
            <person name="Sasaki M."/>
            <person name="Togashi T."/>
            <person name="Oyama M."/>
            <person name="Hata H."/>
            <person name="Watanabe M."/>
            <person name="Komatsu T."/>
            <person name="Mizushima-Sugano J."/>
            <person name="Satoh T."/>
            <person name="Shirai Y."/>
            <person name="Takahashi Y."/>
            <person name="Nakagawa K."/>
            <person name="Okumura K."/>
            <person name="Nagase T."/>
            <person name="Nomura N."/>
            <person name="Kikuchi H."/>
            <person name="Masuho Y."/>
            <person name="Yamashita R."/>
            <person name="Nakai K."/>
            <person name="Yada T."/>
            <person name="Nakamura Y."/>
            <person name="Ohara O."/>
            <person name="Isogai T."/>
            <person name="Sugano S."/>
        </authorList>
    </citation>
    <scope>NUCLEOTIDE SEQUENCE [LARGE SCALE MRNA]</scope>
    <source>
        <tissue>Tongue</tissue>
    </source>
</reference>
<reference key="3">
    <citation type="journal article" date="2006" name="Nature">
        <title>The finished DNA sequence of human chromosome 12.</title>
        <authorList>
            <person name="Scherer S.E."/>
            <person name="Muzny D.M."/>
            <person name="Buhay C.J."/>
            <person name="Chen R."/>
            <person name="Cree A."/>
            <person name="Ding Y."/>
            <person name="Dugan-Rocha S."/>
            <person name="Gill R."/>
            <person name="Gunaratne P."/>
            <person name="Harris R.A."/>
            <person name="Hawes A.C."/>
            <person name="Hernandez J."/>
            <person name="Hodgson A.V."/>
            <person name="Hume J."/>
            <person name="Jackson A."/>
            <person name="Khan Z.M."/>
            <person name="Kovar-Smith C."/>
            <person name="Lewis L.R."/>
            <person name="Lozado R.J."/>
            <person name="Metzker M.L."/>
            <person name="Milosavljevic A."/>
            <person name="Miner G.R."/>
            <person name="Montgomery K.T."/>
            <person name="Morgan M.B."/>
            <person name="Nazareth L.V."/>
            <person name="Scott G."/>
            <person name="Sodergren E."/>
            <person name="Song X.-Z."/>
            <person name="Steffen D."/>
            <person name="Lovering R.C."/>
            <person name="Wheeler D.A."/>
            <person name="Worley K.C."/>
            <person name="Yuan Y."/>
            <person name="Zhang Z."/>
            <person name="Adams C.Q."/>
            <person name="Ansari-Lari M.A."/>
            <person name="Ayele M."/>
            <person name="Brown M.J."/>
            <person name="Chen G."/>
            <person name="Chen Z."/>
            <person name="Clerc-Blankenburg K.P."/>
            <person name="Davis C."/>
            <person name="Delgado O."/>
            <person name="Dinh H.H."/>
            <person name="Draper H."/>
            <person name="Gonzalez-Garay M.L."/>
            <person name="Havlak P."/>
            <person name="Jackson L.R."/>
            <person name="Jacob L.S."/>
            <person name="Kelly S.H."/>
            <person name="Li L."/>
            <person name="Li Z."/>
            <person name="Liu J."/>
            <person name="Liu W."/>
            <person name="Lu J."/>
            <person name="Maheshwari M."/>
            <person name="Nguyen B.-V."/>
            <person name="Okwuonu G.O."/>
            <person name="Pasternak S."/>
            <person name="Perez L.M."/>
            <person name="Plopper F.J.H."/>
            <person name="Santibanez J."/>
            <person name="Shen H."/>
            <person name="Tabor P.E."/>
            <person name="Verduzco D."/>
            <person name="Waldron L."/>
            <person name="Wang Q."/>
            <person name="Williams G.A."/>
            <person name="Zhang J."/>
            <person name="Zhou J."/>
            <person name="Allen C.C."/>
            <person name="Amin A.G."/>
            <person name="Anyalebechi V."/>
            <person name="Bailey M."/>
            <person name="Barbaria J.A."/>
            <person name="Bimage K.E."/>
            <person name="Bryant N.P."/>
            <person name="Burch P.E."/>
            <person name="Burkett C.E."/>
            <person name="Burrell K.L."/>
            <person name="Calderon E."/>
            <person name="Cardenas V."/>
            <person name="Carter K."/>
            <person name="Casias K."/>
            <person name="Cavazos I."/>
            <person name="Cavazos S.R."/>
            <person name="Ceasar H."/>
            <person name="Chacko J."/>
            <person name="Chan S.N."/>
            <person name="Chavez D."/>
            <person name="Christopoulos C."/>
            <person name="Chu J."/>
            <person name="Cockrell R."/>
            <person name="Cox C.D."/>
            <person name="Dang M."/>
            <person name="Dathorne S.R."/>
            <person name="David R."/>
            <person name="Davis C.M."/>
            <person name="Davy-Carroll L."/>
            <person name="Deshazo D.R."/>
            <person name="Donlin J.E."/>
            <person name="D'Souza L."/>
            <person name="Eaves K.A."/>
            <person name="Egan A."/>
            <person name="Emery-Cohen A.J."/>
            <person name="Escotto M."/>
            <person name="Flagg N."/>
            <person name="Forbes L.D."/>
            <person name="Gabisi A.M."/>
            <person name="Garza M."/>
            <person name="Hamilton C."/>
            <person name="Henderson N."/>
            <person name="Hernandez O."/>
            <person name="Hines S."/>
            <person name="Hogues M.E."/>
            <person name="Huang M."/>
            <person name="Idlebird D.G."/>
            <person name="Johnson R."/>
            <person name="Jolivet A."/>
            <person name="Jones S."/>
            <person name="Kagan R."/>
            <person name="King L.M."/>
            <person name="Leal B."/>
            <person name="Lebow H."/>
            <person name="Lee S."/>
            <person name="LeVan J.M."/>
            <person name="Lewis L.C."/>
            <person name="London P."/>
            <person name="Lorensuhewa L.M."/>
            <person name="Loulseged H."/>
            <person name="Lovett D.A."/>
            <person name="Lucier A."/>
            <person name="Lucier R.L."/>
            <person name="Ma J."/>
            <person name="Madu R.C."/>
            <person name="Mapua P."/>
            <person name="Martindale A.D."/>
            <person name="Martinez E."/>
            <person name="Massey E."/>
            <person name="Mawhiney S."/>
            <person name="Meador M.G."/>
            <person name="Mendez S."/>
            <person name="Mercado C."/>
            <person name="Mercado I.C."/>
            <person name="Merritt C.E."/>
            <person name="Miner Z.L."/>
            <person name="Minja E."/>
            <person name="Mitchell T."/>
            <person name="Mohabbat F."/>
            <person name="Mohabbat K."/>
            <person name="Montgomery B."/>
            <person name="Moore N."/>
            <person name="Morris S."/>
            <person name="Munidasa M."/>
            <person name="Ngo R.N."/>
            <person name="Nguyen N.B."/>
            <person name="Nickerson E."/>
            <person name="Nwaokelemeh O.O."/>
            <person name="Nwokenkwo S."/>
            <person name="Obregon M."/>
            <person name="Oguh M."/>
            <person name="Oragunye N."/>
            <person name="Oviedo R.J."/>
            <person name="Parish B.J."/>
            <person name="Parker D.N."/>
            <person name="Parrish J."/>
            <person name="Parks K.L."/>
            <person name="Paul H.A."/>
            <person name="Payton B.A."/>
            <person name="Perez A."/>
            <person name="Perrin W."/>
            <person name="Pickens A."/>
            <person name="Primus E.L."/>
            <person name="Pu L.-L."/>
            <person name="Puazo M."/>
            <person name="Quiles M.M."/>
            <person name="Quiroz J.B."/>
            <person name="Rabata D."/>
            <person name="Reeves K."/>
            <person name="Ruiz S.J."/>
            <person name="Shao H."/>
            <person name="Sisson I."/>
            <person name="Sonaike T."/>
            <person name="Sorelle R.P."/>
            <person name="Sutton A.E."/>
            <person name="Svatek A.F."/>
            <person name="Svetz L.A."/>
            <person name="Tamerisa K.S."/>
            <person name="Taylor T.R."/>
            <person name="Teague B."/>
            <person name="Thomas N."/>
            <person name="Thorn R.D."/>
            <person name="Trejos Z.Y."/>
            <person name="Trevino B.K."/>
            <person name="Ukegbu O.N."/>
            <person name="Urban J.B."/>
            <person name="Vasquez L.I."/>
            <person name="Vera V.A."/>
            <person name="Villasana D.M."/>
            <person name="Wang L."/>
            <person name="Ward-Moore S."/>
            <person name="Warren J.T."/>
            <person name="Wei X."/>
            <person name="White F."/>
            <person name="Williamson A.L."/>
            <person name="Wleczyk R."/>
            <person name="Wooden H.S."/>
            <person name="Wooden S.H."/>
            <person name="Yen J."/>
            <person name="Yoon L."/>
            <person name="Yoon V."/>
            <person name="Zorrilla S.E."/>
            <person name="Nelson D."/>
            <person name="Kucherlapati R."/>
            <person name="Weinstock G."/>
            <person name="Gibbs R.A."/>
        </authorList>
    </citation>
    <scope>NUCLEOTIDE SEQUENCE [LARGE SCALE GENOMIC DNA]</scope>
</reference>
<reference key="4">
    <citation type="journal article" date="2004" name="Genome Res.">
        <title>The status, quality, and expansion of the NIH full-length cDNA project: the Mammalian Gene Collection (MGC).</title>
        <authorList>
            <consortium name="The MGC Project Team"/>
        </authorList>
    </citation>
    <scope>NUCLEOTIDE SEQUENCE [LARGE SCALE MRNA]</scope>
</reference>
<reference key="5">
    <citation type="journal article" date="2005" name="J. Invest. Dermatol.">
        <title>Characterization of new members of the human type II keratin gene family and a general evaluation of the keratin gene domain on chromosome 12q13.13.</title>
        <authorList>
            <person name="Rogers M.A."/>
            <person name="Edler L."/>
            <person name="Winter H."/>
            <person name="Langbein L."/>
            <person name="Beckmann I."/>
            <person name="Schweizer J."/>
        </authorList>
    </citation>
    <scope>NUCLEOTIDE SEQUENCE [MRNA] OF 3-600</scope>
    <source>
        <tissue>Scalp</tissue>
    </source>
</reference>
<protein>
    <recommendedName>
        <fullName>Keratin, type II cuticular Hb4</fullName>
    </recommendedName>
    <alternativeName>
        <fullName>Keratin-84</fullName>
        <shortName>K84</shortName>
    </alternativeName>
    <alternativeName>
        <fullName>Type II hair keratin Hb4</fullName>
    </alternativeName>
    <alternativeName>
        <fullName>Type-II keratin Kb24</fullName>
    </alternativeName>
</protein>